<name>RF3_YERE8</name>
<sequence>MSPSEYALEVAKRRTFAIISHPDAGKTTITEKVLLFGNAIQTAGTVKGRGSSHHAKSDWMEMEKQRGISITTSVMQFPYGGCLVNLLDTPGHEDFSEDTYRTLTAVDCCLMVIDAAKGVEDRTRKLMEVTRLRDTPILTFMNKLDRDIRDPMEVLDEVERELKIACSPITWPIGCGKLFKGVYHLYKDETYLYQTGKGHTIQEVRIVKGLNNPDLDVAVGEDLAKQFRQELELVQGASHEFDHDAFLSGDLTPVFFGTALGNFGVDHMLDGLVEWAPAPMPRQTDTREVVAAEEKFTGFVFKIQANMDPKHRDRVAFLRVVSGRFEKGMKLRQVRTKKDVVISDALTFMAGDRSHLEEAYAGDIIGLHNHGTIQIGDTFTQGEDMKFTGIPNFAPELFRRIRLRDPLKQKQLLKGLVQLSEEGAVQVFRPLTNNDLIVGAVGVLQFEVVSSRLKSEYNVEAVYESVNVSTARWVECDDVKKFEEFKRKNEVNLALDGGDNLSYIAPTMVNLNITQERYPEVRFRKTREH</sequence>
<feature type="chain" id="PRO_1000023696" description="Peptide chain release factor 3">
    <location>
        <begin position="1"/>
        <end position="529"/>
    </location>
</feature>
<feature type="domain" description="tr-type G">
    <location>
        <begin position="11"/>
        <end position="280"/>
    </location>
</feature>
<feature type="binding site" evidence="1">
    <location>
        <begin position="20"/>
        <end position="27"/>
    </location>
    <ligand>
        <name>GTP</name>
        <dbReference type="ChEBI" id="CHEBI:37565"/>
    </ligand>
</feature>
<feature type="binding site" evidence="1">
    <location>
        <begin position="88"/>
        <end position="92"/>
    </location>
    <ligand>
        <name>GTP</name>
        <dbReference type="ChEBI" id="CHEBI:37565"/>
    </ligand>
</feature>
<feature type="binding site" evidence="1">
    <location>
        <begin position="142"/>
        <end position="145"/>
    </location>
    <ligand>
        <name>GTP</name>
        <dbReference type="ChEBI" id="CHEBI:37565"/>
    </ligand>
</feature>
<protein>
    <recommendedName>
        <fullName evidence="1">Peptide chain release factor 3</fullName>
        <shortName evidence="1">RF-3</shortName>
    </recommendedName>
</protein>
<comment type="function">
    <text evidence="1">Increases the formation of ribosomal termination complexes and stimulates activities of RF-1 and RF-2. It binds guanine nucleotides and has strong preference for UGA stop codons. It may interact directly with the ribosome. The stimulation of RF-1 and RF-2 is significantly reduced by GTP and GDP, but not by GMP.</text>
</comment>
<comment type="subcellular location">
    <subcellularLocation>
        <location evidence="1">Cytoplasm</location>
    </subcellularLocation>
</comment>
<comment type="similarity">
    <text evidence="1">Belongs to the TRAFAC class translation factor GTPase superfamily. Classic translation factor GTPase family. PrfC subfamily.</text>
</comment>
<proteinExistence type="inferred from homology"/>
<gene>
    <name evidence="1" type="primary">prfC</name>
    <name type="ordered locus">YE0564</name>
</gene>
<keyword id="KW-0963">Cytoplasm</keyword>
<keyword id="KW-0342">GTP-binding</keyword>
<keyword id="KW-0547">Nucleotide-binding</keyword>
<keyword id="KW-0648">Protein biosynthesis</keyword>
<accession>A1JJ92</accession>
<dbReference type="EMBL" id="AM286415">
    <property type="protein sequence ID" value="CAL10682.1"/>
    <property type="molecule type" value="Genomic_DNA"/>
</dbReference>
<dbReference type="RefSeq" id="WP_005166905.1">
    <property type="nucleotide sequence ID" value="NC_008800.1"/>
</dbReference>
<dbReference type="RefSeq" id="YP_001004923.1">
    <property type="nucleotide sequence ID" value="NC_008800.1"/>
</dbReference>
<dbReference type="SMR" id="A1JJ92"/>
<dbReference type="KEGG" id="yen:YE0564"/>
<dbReference type="PATRIC" id="fig|393305.7.peg.657"/>
<dbReference type="eggNOG" id="COG4108">
    <property type="taxonomic scope" value="Bacteria"/>
</dbReference>
<dbReference type="HOGENOM" id="CLU_002794_2_1_6"/>
<dbReference type="OrthoDB" id="9801472at2"/>
<dbReference type="Proteomes" id="UP000000642">
    <property type="component" value="Chromosome"/>
</dbReference>
<dbReference type="GO" id="GO:0005829">
    <property type="term" value="C:cytosol"/>
    <property type="evidence" value="ECO:0007669"/>
    <property type="project" value="TreeGrafter"/>
</dbReference>
<dbReference type="GO" id="GO:0005525">
    <property type="term" value="F:GTP binding"/>
    <property type="evidence" value="ECO:0007669"/>
    <property type="project" value="UniProtKB-UniRule"/>
</dbReference>
<dbReference type="GO" id="GO:0003924">
    <property type="term" value="F:GTPase activity"/>
    <property type="evidence" value="ECO:0007669"/>
    <property type="project" value="InterPro"/>
</dbReference>
<dbReference type="GO" id="GO:0097216">
    <property type="term" value="F:guanosine tetraphosphate binding"/>
    <property type="evidence" value="ECO:0007669"/>
    <property type="project" value="UniProtKB-ARBA"/>
</dbReference>
<dbReference type="GO" id="GO:0016150">
    <property type="term" value="F:translation release factor activity, codon nonspecific"/>
    <property type="evidence" value="ECO:0007669"/>
    <property type="project" value="TreeGrafter"/>
</dbReference>
<dbReference type="GO" id="GO:0016149">
    <property type="term" value="F:translation release factor activity, codon specific"/>
    <property type="evidence" value="ECO:0007669"/>
    <property type="project" value="UniProtKB-UniRule"/>
</dbReference>
<dbReference type="GO" id="GO:0006449">
    <property type="term" value="P:regulation of translational termination"/>
    <property type="evidence" value="ECO:0007669"/>
    <property type="project" value="UniProtKB-UniRule"/>
</dbReference>
<dbReference type="CDD" id="cd04169">
    <property type="entry name" value="RF3"/>
    <property type="match status" value="1"/>
</dbReference>
<dbReference type="CDD" id="cd03689">
    <property type="entry name" value="RF3_II"/>
    <property type="match status" value="1"/>
</dbReference>
<dbReference type="CDD" id="cd16259">
    <property type="entry name" value="RF3_III"/>
    <property type="match status" value="1"/>
</dbReference>
<dbReference type="FunFam" id="2.40.30.10:FF:000040">
    <property type="entry name" value="Peptide chain release factor 3"/>
    <property type="match status" value="1"/>
</dbReference>
<dbReference type="FunFam" id="3.30.70.3280:FF:000001">
    <property type="entry name" value="Peptide chain release factor 3"/>
    <property type="match status" value="1"/>
</dbReference>
<dbReference type="FunFam" id="3.40.50.300:FF:000542">
    <property type="entry name" value="Peptide chain release factor 3"/>
    <property type="match status" value="1"/>
</dbReference>
<dbReference type="Gene3D" id="3.40.50.300">
    <property type="entry name" value="P-loop containing nucleotide triphosphate hydrolases"/>
    <property type="match status" value="2"/>
</dbReference>
<dbReference type="Gene3D" id="3.30.70.3280">
    <property type="entry name" value="Peptide chain release factor 3, domain III"/>
    <property type="match status" value="1"/>
</dbReference>
<dbReference type="HAMAP" id="MF_00072">
    <property type="entry name" value="Rel_fac_3"/>
    <property type="match status" value="1"/>
</dbReference>
<dbReference type="InterPro" id="IPR053905">
    <property type="entry name" value="EF-G-like_DII"/>
</dbReference>
<dbReference type="InterPro" id="IPR035647">
    <property type="entry name" value="EFG_III/V"/>
</dbReference>
<dbReference type="InterPro" id="IPR031157">
    <property type="entry name" value="G_TR_CS"/>
</dbReference>
<dbReference type="InterPro" id="IPR027417">
    <property type="entry name" value="P-loop_NTPase"/>
</dbReference>
<dbReference type="InterPro" id="IPR004548">
    <property type="entry name" value="PrfC"/>
</dbReference>
<dbReference type="InterPro" id="IPR032090">
    <property type="entry name" value="RF3_C"/>
</dbReference>
<dbReference type="InterPro" id="IPR038467">
    <property type="entry name" value="RF3_dom_3_sf"/>
</dbReference>
<dbReference type="InterPro" id="IPR041732">
    <property type="entry name" value="RF3_GTP-bd"/>
</dbReference>
<dbReference type="InterPro" id="IPR005225">
    <property type="entry name" value="Small_GTP-bd"/>
</dbReference>
<dbReference type="InterPro" id="IPR000795">
    <property type="entry name" value="T_Tr_GTP-bd_dom"/>
</dbReference>
<dbReference type="InterPro" id="IPR009000">
    <property type="entry name" value="Transl_B-barrel_sf"/>
</dbReference>
<dbReference type="NCBIfam" id="TIGR00503">
    <property type="entry name" value="prfC"/>
    <property type="match status" value="1"/>
</dbReference>
<dbReference type="NCBIfam" id="NF001964">
    <property type="entry name" value="PRK00741.1"/>
    <property type="match status" value="1"/>
</dbReference>
<dbReference type="NCBIfam" id="TIGR00231">
    <property type="entry name" value="small_GTP"/>
    <property type="match status" value="1"/>
</dbReference>
<dbReference type="PANTHER" id="PTHR43556">
    <property type="entry name" value="PEPTIDE CHAIN RELEASE FACTOR RF3"/>
    <property type="match status" value="1"/>
</dbReference>
<dbReference type="PANTHER" id="PTHR43556:SF2">
    <property type="entry name" value="PEPTIDE CHAIN RELEASE FACTOR RF3"/>
    <property type="match status" value="1"/>
</dbReference>
<dbReference type="Pfam" id="PF22042">
    <property type="entry name" value="EF-G_D2"/>
    <property type="match status" value="1"/>
</dbReference>
<dbReference type="Pfam" id="PF00009">
    <property type="entry name" value="GTP_EFTU"/>
    <property type="match status" value="1"/>
</dbReference>
<dbReference type="Pfam" id="PF16658">
    <property type="entry name" value="RF3_C"/>
    <property type="match status" value="1"/>
</dbReference>
<dbReference type="PRINTS" id="PR00315">
    <property type="entry name" value="ELONGATNFCT"/>
</dbReference>
<dbReference type="SUPFAM" id="SSF54980">
    <property type="entry name" value="EF-G C-terminal domain-like"/>
    <property type="match status" value="1"/>
</dbReference>
<dbReference type="SUPFAM" id="SSF52540">
    <property type="entry name" value="P-loop containing nucleoside triphosphate hydrolases"/>
    <property type="match status" value="1"/>
</dbReference>
<dbReference type="SUPFAM" id="SSF50447">
    <property type="entry name" value="Translation proteins"/>
    <property type="match status" value="1"/>
</dbReference>
<dbReference type="PROSITE" id="PS00301">
    <property type="entry name" value="G_TR_1"/>
    <property type="match status" value="1"/>
</dbReference>
<dbReference type="PROSITE" id="PS51722">
    <property type="entry name" value="G_TR_2"/>
    <property type="match status" value="1"/>
</dbReference>
<reference key="1">
    <citation type="journal article" date="2006" name="PLoS Genet.">
        <title>The complete genome sequence and comparative genome analysis of the high pathogenicity Yersinia enterocolitica strain 8081.</title>
        <authorList>
            <person name="Thomson N.R."/>
            <person name="Howard S."/>
            <person name="Wren B.W."/>
            <person name="Holden M.T.G."/>
            <person name="Crossman L."/>
            <person name="Challis G.L."/>
            <person name="Churcher C."/>
            <person name="Mungall K."/>
            <person name="Brooks K."/>
            <person name="Chillingworth T."/>
            <person name="Feltwell T."/>
            <person name="Abdellah Z."/>
            <person name="Hauser H."/>
            <person name="Jagels K."/>
            <person name="Maddison M."/>
            <person name="Moule S."/>
            <person name="Sanders M."/>
            <person name="Whitehead S."/>
            <person name="Quail M.A."/>
            <person name="Dougan G."/>
            <person name="Parkhill J."/>
            <person name="Prentice M.B."/>
        </authorList>
    </citation>
    <scope>NUCLEOTIDE SEQUENCE [LARGE SCALE GENOMIC DNA]</scope>
    <source>
        <strain>NCTC 13174 / 8081</strain>
    </source>
</reference>
<evidence type="ECO:0000255" key="1">
    <source>
        <dbReference type="HAMAP-Rule" id="MF_00072"/>
    </source>
</evidence>
<organism>
    <name type="scientific">Yersinia enterocolitica serotype O:8 / biotype 1B (strain NCTC 13174 / 8081)</name>
    <dbReference type="NCBI Taxonomy" id="393305"/>
    <lineage>
        <taxon>Bacteria</taxon>
        <taxon>Pseudomonadati</taxon>
        <taxon>Pseudomonadota</taxon>
        <taxon>Gammaproteobacteria</taxon>
        <taxon>Enterobacterales</taxon>
        <taxon>Yersiniaceae</taxon>
        <taxon>Yersinia</taxon>
    </lineage>
</organism>